<comment type="function">
    <text evidence="1">This protein is located at the 30S-50S ribosomal subunit interface and may play a role in the structure and function of the aminoacyl-tRNA binding site.</text>
</comment>
<comment type="similarity">
    <text evidence="1">Belongs to the bacterial ribosomal protein bL19 family.</text>
</comment>
<keyword id="KW-1185">Reference proteome</keyword>
<keyword id="KW-0687">Ribonucleoprotein</keyword>
<keyword id="KW-0689">Ribosomal protein</keyword>
<organism>
    <name type="scientific">Photobacterium profundum (strain SS9)</name>
    <dbReference type="NCBI Taxonomy" id="298386"/>
    <lineage>
        <taxon>Bacteria</taxon>
        <taxon>Pseudomonadati</taxon>
        <taxon>Pseudomonadota</taxon>
        <taxon>Gammaproteobacteria</taxon>
        <taxon>Vibrionales</taxon>
        <taxon>Vibrionaceae</taxon>
        <taxon>Photobacterium</taxon>
    </lineage>
</organism>
<reference key="1">
    <citation type="journal article" date="2005" name="Science">
        <title>Life at depth: Photobacterium profundum genome sequence and expression analysis.</title>
        <authorList>
            <person name="Vezzi A."/>
            <person name="Campanaro S."/>
            <person name="D'Angelo M."/>
            <person name="Simonato F."/>
            <person name="Vitulo N."/>
            <person name="Lauro F.M."/>
            <person name="Cestaro A."/>
            <person name="Malacrida G."/>
            <person name="Simionati B."/>
            <person name="Cannata N."/>
            <person name="Romualdi C."/>
            <person name="Bartlett D.H."/>
            <person name="Valle G."/>
        </authorList>
    </citation>
    <scope>NUCLEOTIDE SEQUENCE [LARGE SCALE GENOMIC DNA]</scope>
    <source>
        <strain>ATCC BAA-1253 / SS9</strain>
    </source>
</reference>
<dbReference type="EMBL" id="CR378672">
    <property type="protein sequence ID" value="CAG21366.1"/>
    <property type="molecule type" value="Genomic_DNA"/>
</dbReference>
<dbReference type="RefSeq" id="WP_011219628.1">
    <property type="nucleotide sequence ID" value="NC_006370.1"/>
</dbReference>
<dbReference type="SMR" id="Q6LMW0"/>
<dbReference type="STRING" id="298386.PBPRA3038"/>
<dbReference type="KEGG" id="ppr:PBPRA3038"/>
<dbReference type="eggNOG" id="COG0335">
    <property type="taxonomic scope" value="Bacteria"/>
</dbReference>
<dbReference type="HOGENOM" id="CLU_103507_2_1_6"/>
<dbReference type="Proteomes" id="UP000000593">
    <property type="component" value="Chromosome 1"/>
</dbReference>
<dbReference type="GO" id="GO:0022625">
    <property type="term" value="C:cytosolic large ribosomal subunit"/>
    <property type="evidence" value="ECO:0007669"/>
    <property type="project" value="TreeGrafter"/>
</dbReference>
<dbReference type="GO" id="GO:0003735">
    <property type="term" value="F:structural constituent of ribosome"/>
    <property type="evidence" value="ECO:0007669"/>
    <property type="project" value="InterPro"/>
</dbReference>
<dbReference type="GO" id="GO:0006412">
    <property type="term" value="P:translation"/>
    <property type="evidence" value="ECO:0007669"/>
    <property type="project" value="UniProtKB-UniRule"/>
</dbReference>
<dbReference type="FunFam" id="2.30.30.790:FF:000001">
    <property type="entry name" value="50S ribosomal protein L19"/>
    <property type="match status" value="1"/>
</dbReference>
<dbReference type="Gene3D" id="2.30.30.790">
    <property type="match status" value="1"/>
</dbReference>
<dbReference type="HAMAP" id="MF_00402">
    <property type="entry name" value="Ribosomal_bL19"/>
    <property type="match status" value="1"/>
</dbReference>
<dbReference type="InterPro" id="IPR001857">
    <property type="entry name" value="Ribosomal_bL19"/>
</dbReference>
<dbReference type="InterPro" id="IPR018257">
    <property type="entry name" value="Ribosomal_bL19_CS"/>
</dbReference>
<dbReference type="InterPro" id="IPR038657">
    <property type="entry name" value="Ribosomal_bL19_sf"/>
</dbReference>
<dbReference type="InterPro" id="IPR008991">
    <property type="entry name" value="Translation_prot_SH3-like_sf"/>
</dbReference>
<dbReference type="NCBIfam" id="TIGR01024">
    <property type="entry name" value="rplS_bact"/>
    <property type="match status" value="1"/>
</dbReference>
<dbReference type="PANTHER" id="PTHR15680:SF9">
    <property type="entry name" value="LARGE RIBOSOMAL SUBUNIT PROTEIN BL19M"/>
    <property type="match status" value="1"/>
</dbReference>
<dbReference type="PANTHER" id="PTHR15680">
    <property type="entry name" value="RIBOSOMAL PROTEIN L19"/>
    <property type="match status" value="1"/>
</dbReference>
<dbReference type="Pfam" id="PF01245">
    <property type="entry name" value="Ribosomal_L19"/>
    <property type="match status" value="1"/>
</dbReference>
<dbReference type="PIRSF" id="PIRSF002191">
    <property type="entry name" value="Ribosomal_L19"/>
    <property type="match status" value="1"/>
</dbReference>
<dbReference type="PRINTS" id="PR00061">
    <property type="entry name" value="RIBOSOMALL19"/>
</dbReference>
<dbReference type="SUPFAM" id="SSF50104">
    <property type="entry name" value="Translation proteins SH3-like domain"/>
    <property type="match status" value="1"/>
</dbReference>
<dbReference type="PROSITE" id="PS01015">
    <property type="entry name" value="RIBOSOMAL_L19"/>
    <property type="match status" value="1"/>
</dbReference>
<sequence>MSNIIKQIEDEQLKQDLPTFAPGDTVVVQVKVKEGDRERLQAFEGVVIAKRNRGLHSAFTVRKISNGEGVERAFQTHSPVVDSITVKRRGLVRRAKLYYLRERSGKSARIKEKLVRKSS</sequence>
<gene>
    <name evidence="1" type="primary">rplS</name>
    <name type="ordered locus">PBPRA3038</name>
</gene>
<name>RL19_PHOPR</name>
<evidence type="ECO:0000255" key="1">
    <source>
        <dbReference type="HAMAP-Rule" id="MF_00402"/>
    </source>
</evidence>
<evidence type="ECO:0000305" key="2"/>
<proteinExistence type="inferred from homology"/>
<protein>
    <recommendedName>
        <fullName evidence="1">Large ribosomal subunit protein bL19</fullName>
    </recommendedName>
    <alternativeName>
        <fullName evidence="2">50S ribosomal protein L19</fullName>
    </alternativeName>
</protein>
<accession>Q6LMW0</accession>
<feature type="chain" id="PRO_0000163504" description="Large ribosomal subunit protein bL19">
    <location>
        <begin position="1"/>
        <end position="119"/>
    </location>
</feature>